<sequence length="1054" mass="120974">MAAVKEPLEFHAKRPWRPEEAVEDPDEEDEDNTSEAENGFSLEEVLRLGGTKQDYLMLATLDENEEVIDGGKKGAIDDLQQGELEAFIQNLNLAKYTKASLVEEDEPAEKENSSKKEVKIPKINNKNTAESQRTSVNKVKNKNRPEPHSDENGSTTPKVKKDKQNIFEFFERQTLLLRPGGKWYDLEYSNEYSLKPQPQDVVSKYKTLAQKLYQHEINLFKSKTNSQKGASSTWMKAIVSSGTLGDRMAAMILLIQDDAVHTLQFVETLVNLVKKKGSKQQCLMALDTFKELLITDLLPDNRKLRIFSQRPFDKLEQLSSGNKDSRDRRLILWYFEHQLKHLVAEFVQVLETLSHDTLVTTKTRALTVAHELLCNKPEEEKALLVQVVNKLGDPQNRIATKASHLLETLLCKHPNMKGVVSGEVERLLFRSNISSKAQYYAICFLNQMALSHEESELANKLITVYFCFFRTCVKKKDVESKMLSALLTGVNRAYPYSQTGDDKVREQIDTLFKVLHIVNFNTSVQALMLLFQVMNSQQTISDRYYTALYRKMLDPGLMTCSKQAMFLNLVYKSLKADIVLRRVKAFVKRLLQVTCQQMPPFICGALYLVSEILKAKPGLRSQLDDHPESDDEENFIDANDDEDMEKFTDADKETEIVKKLETEETVPETDVETKKPEVASWVHFDNLKGGKQLNKYDPFSRNPLFCGAENTSLWELKKLSVHFHPSVALFAKTILQGNYIQYSGDPLQDFTLMRFLDRFVYRNPKPHKGKENTDSVVMQPKRKHFIKDIRHLPVNSKEFLAKEESQIPVDEVFFHRYYKKVAVKEKQKRDADEESIEDVDDEEFEELIDTFEDDNCFSSGKDDMDFAGNVKKRTKGAKDNTLDEDSEGSDDELGNLDDDEVSLGSMDDEEFAEVDEDGGTFMDVLDDESESVPELEVHSKVSTKKSKRKGTDDFDFAGSFQGPRKKKRNLNDSSLFVSAEEFGHLLDENMGSKFDNIGMNAMANKDNASLKQLRWEAERDDWLHNRDAKSIIKKKKHFKKKRIKTTQKTKKQRK</sequence>
<feature type="chain" id="PRO_0000173470" description="CCAAT/enhancer-binding protein zeta">
    <location>
        <begin position="1"/>
        <end position="1054"/>
    </location>
</feature>
<feature type="region of interest" description="Disordered" evidence="1">
    <location>
        <begin position="1"/>
        <end position="42"/>
    </location>
</feature>
<feature type="region of interest" description="Disordered" evidence="1">
    <location>
        <begin position="102"/>
        <end position="160"/>
    </location>
</feature>
<feature type="region of interest" description="Disordered" evidence="1">
    <location>
        <begin position="873"/>
        <end position="902"/>
    </location>
</feature>
<feature type="region of interest" description="Disordered" evidence="1">
    <location>
        <begin position="915"/>
        <end position="969"/>
    </location>
</feature>
<feature type="region of interest" description="Disordered" evidence="1">
    <location>
        <begin position="1031"/>
        <end position="1054"/>
    </location>
</feature>
<feature type="compositionally biased region" description="Basic and acidic residues" evidence="1">
    <location>
        <begin position="1"/>
        <end position="20"/>
    </location>
</feature>
<feature type="compositionally biased region" description="Acidic residues" evidence="1">
    <location>
        <begin position="21"/>
        <end position="34"/>
    </location>
</feature>
<feature type="compositionally biased region" description="Basic and acidic residues" evidence="1">
    <location>
        <begin position="109"/>
        <end position="120"/>
    </location>
</feature>
<feature type="compositionally biased region" description="Polar residues" evidence="1">
    <location>
        <begin position="124"/>
        <end position="138"/>
    </location>
</feature>
<feature type="compositionally biased region" description="Acidic residues" evidence="1">
    <location>
        <begin position="882"/>
        <end position="902"/>
    </location>
</feature>
<feature type="compositionally biased region" description="Acidic residues" evidence="1">
    <location>
        <begin position="915"/>
        <end position="933"/>
    </location>
</feature>
<feature type="modified residue" description="Phosphoserine" evidence="11">
    <location>
        <position position="113"/>
    </location>
</feature>
<feature type="modified residue" description="Phosphoserine" evidence="5 6 8 9 10 11 12">
    <location>
        <position position="629"/>
    </location>
</feature>
<feature type="modified residue" description="N6-acetyllysine" evidence="7">
    <location>
        <position position="695"/>
    </location>
</feature>
<feature type="modified residue" description="Phosphoserine" evidence="4">
    <location>
        <position position="835"/>
    </location>
</feature>
<feature type="modified residue" description="Phosphoserine" evidence="11">
    <location>
        <position position="959"/>
    </location>
</feature>
<feature type="modified residue" description="Phosphoserine" evidence="8">
    <location>
        <position position="973"/>
    </location>
</feature>
<feature type="modified residue" description="Phosphoserine" evidence="5">
    <location>
        <position position="978"/>
    </location>
</feature>
<feature type="sequence variant" id="VAR_031399" description="In dbSNP:rs3213746.">
    <original>P</original>
    <variation>S</variation>
    <location>
        <position position="15"/>
    </location>
</feature>
<feature type="sequence variant" id="VAR_026043" description="In dbSNP:rs2098386." evidence="2 11">
    <original>V</original>
    <variation>I</variation>
    <location>
        <position position="102"/>
    </location>
</feature>
<feature type="sequence variant" id="VAR_031400" description="In dbSNP:rs17020328.">
    <original>K</original>
    <variation>R</variation>
    <location>
        <position position="303"/>
    </location>
</feature>
<feature type="sequence variant" id="VAR_055622" description="In dbSNP:rs3180252.">
    <original>N</original>
    <variation>S</variation>
    <location>
        <position position="639"/>
    </location>
</feature>
<feature type="sequence conflict" description="In Ref. 1; AAA51924." evidence="3" ref="1">
    <original>R</original>
    <variation>G</variation>
    <location>
        <position position="589"/>
    </location>
</feature>
<organism>
    <name type="scientific">Homo sapiens</name>
    <name type="common">Human</name>
    <dbReference type="NCBI Taxonomy" id="9606"/>
    <lineage>
        <taxon>Eukaryota</taxon>
        <taxon>Metazoa</taxon>
        <taxon>Chordata</taxon>
        <taxon>Craniata</taxon>
        <taxon>Vertebrata</taxon>
        <taxon>Euteleostomi</taxon>
        <taxon>Mammalia</taxon>
        <taxon>Eutheria</taxon>
        <taxon>Euarchontoglires</taxon>
        <taxon>Primates</taxon>
        <taxon>Haplorrhini</taxon>
        <taxon>Catarrhini</taxon>
        <taxon>Hominidae</taxon>
        <taxon>Homo</taxon>
    </lineage>
</organism>
<proteinExistence type="evidence at protein level"/>
<accession>Q03701</accession>
<accession>Q8NE75</accession>
<dbReference type="EMBL" id="M37197">
    <property type="protein sequence ID" value="AAA51924.1"/>
    <property type="status" value="ALT_FRAME"/>
    <property type="molecule type" value="mRNA"/>
</dbReference>
<dbReference type="EMBL" id="AC007390">
    <property type="protein sequence ID" value="AAY14815.1"/>
    <property type="molecule type" value="Genomic_DNA"/>
</dbReference>
<dbReference type="EMBL" id="BC034475">
    <property type="protein sequence ID" value="AAH34475.1"/>
    <property type="molecule type" value="mRNA"/>
</dbReference>
<dbReference type="CCDS" id="CCDS1787.1"/>
<dbReference type="PIR" id="A36368">
    <property type="entry name" value="A36368"/>
</dbReference>
<dbReference type="RefSeq" id="NP_005751.2">
    <property type="nucleotide sequence ID" value="NM_005760.2"/>
</dbReference>
<dbReference type="SMR" id="Q03701"/>
<dbReference type="BioGRID" id="115455">
    <property type="interactions" value="279"/>
</dbReference>
<dbReference type="FunCoup" id="Q03701">
    <property type="interactions" value="3495"/>
</dbReference>
<dbReference type="IntAct" id="Q03701">
    <property type="interactions" value="137"/>
</dbReference>
<dbReference type="MINT" id="Q03701"/>
<dbReference type="STRING" id="9606.ENSP00000234170"/>
<dbReference type="GlyGen" id="Q03701">
    <property type="glycosylation" value="1 site, 1 O-linked glycan (1 site)"/>
</dbReference>
<dbReference type="iPTMnet" id="Q03701"/>
<dbReference type="MetOSite" id="Q03701"/>
<dbReference type="PhosphoSitePlus" id="Q03701"/>
<dbReference type="SwissPalm" id="Q03701"/>
<dbReference type="BioMuta" id="CEBPZ"/>
<dbReference type="DMDM" id="308153621"/>
<dbReference type="jPOST" id="Q03701"/>
<dbReference type="MassIVE" id="Q03701"/>
<dbReference type="PaxDb" id="9606-ENSP00000234170"/>
<dbReference type="PeptideAtlas" id="Q03701"/>
<dbReference type="ProteomicsDB" id="58219"/>
<dbReference type="Pumba" id="Q03701"/>
<dbReference type="Antibodypedia" id="14550">
    <property type="antibodies" value="201 antibodies from 33 providers"/>
</dbReference>
<dbReference type="DNASU" id="10153"/>
<dbReference type="Ensembl" id="ENST00000234170.10">
    <property type="protein sequence ID" value="ENSP00000234170.5"/>
    <property type="gene ID" value="ENSG00000115816.15"/>
</dbReference>
<dbReference type="GeneID" id="10153"/>
<dbReference type="KEGG" id="hsa:10153"/>
<dbReference type="MANE-Select" id="ENST00000234170.10">
    <property type="protein sequence ID" value="ENSP00000234170.5"/>
    <property type="RefSeq nucleotide sequence ID" value="NM_005760.3"/>
    <property type="RefSeq protein sequence ID" value="NP_005751.2"/>
</dbReference>
<dbReference type="UCSC" id="uc002rpz.5">
    <property type="organism name" value="human"/>
</dbReference>
<dbReference type="AGR" id="HGNC:24218"/>
<dbReference type="CTD" id="10153"/>
<dbReference type="DisGeNET" id="10153"/>
<dbReference type="GeneCards" id="CEBPZ"/>
<dbReference type="HGNC" id="HGNC:24218">
    <property type="gene designation" value="CEBPZ"/>
</dbReference>
<dbReference type="HPA" id="ENSG00000115816">
    <property type="expression patterns" value="Low tissue specificity"/>
</dbReference>
<dbReference type="MIM" id="612828">
    <property type="type" value="gene"/>
</dbReference>
<dbReference type="neXtProt" id="NX_Q03701"/>
<dbReference type="OpenTargets" id="ENSG00000115816"/>
<dbReference type="PharmGKB" id="PA134977051"/>
<dbReference type="VEuPathDB" id="HostDB:ENSG00000115816"/>
<dbReference type="eggNOG" id="KOG2038">
    <property type="taxonomic scope" value="Eukaryota"/>
</dbReference>
<dbReference type="GeneTree" id="ENSGT00390000006395"/>
<dbReference type="InParanoid" id="Q03701"/>
<dbReference type="OMA" id="EIWCNDE"/>
<dbReference type="OrthoDB" id="28947at2759"/>
<dbReference type="PAN-GO" id="Q03701">
    <property type="GO annotations" value="1 GO annotation based on evolutionary models"/>
</dbReference>
<dbReference type="PhylomeDB" id="Q03701"/>
<dbReference type="TreeFam" id="TF105010"/>
<dbReference type="PathwayCommons" id="Q03701"/>
<dbReference type="SignaLink" id="Q03701"/>
<dbReference type="BioGRID-ORCS" id="10153">
    <property type="hits" value="722 hits in 1198 CRISPR screens"/>
</dbReference>
<dbReference type="CD-CODE" id="91857CE7">
    <property type="entry name" value="Nucleolus"/>
</dbReference>
<dbReference type="ChiTaRS" id="CEBPZ">
    <property type="organism name" value="human"/>
</dbReference>
<dbReference type="GeneWiki" id="CCAAT/enhancer_binding_protein_zeta"/>
<dbReference type="GenomeRNAi" id="10153"/>
<dbReference type="Pharos" id="Q03701">
    <property type="development level" value="Tbio"/>
</dbReference>
<dbReference type="PRO" id="PR:Q03701"/>
<dbReference type="Proteomes" id="UP000005640">
    <property type="component" value="Chromosome 2"/>
</dbReference>
<dbReference type="RNAct" id="Q03701">
    <property type="molecule type" value="protein"/>
</dbReference>
<dbReference type="Bgee" id="ENSG00000115816">
    <property type="expression patterns" value="Expressed in calcaneal tendon and 211 other cell types or tissues"/>
</dbReference>
<dbReference type="ExpressionAtlas" id="Q03701">
    <property type="expression patterns" value="baseline and differential"/>
</dbReference>
<dbReference type="GO" id="GO:0016602">
    <property type="term" value="C:CCAAT-binding factor complex"/>
    <property type="evidence" value="ECO:0007669"/>
    <property type="project" value="Ensembl"/>
</dbReference>
<dbReference type="GO" id="GO:0043231">
    <property type="term" value="C:intracellular membrane-bounded organelle"/>
    <property type="evidence" value="ECO:0000314"/>
    <property type="project" value="HPA"/>
</dbReference>
<dbReference type="GO" id="GO:0005654">
    <property type="term" value="C:nucleoplasm"/>
    <property type="evidence" value="ECO:0000314"/>
    <property type="project" value="HPA"/>
</dbReference>
<dbReference type="GO" id="GO:0005634">
    <property type="term" value="C:nucleus"/>
    <property type="evidence" value="ECO:0000314"/>
    <property type="project" value="ARUK-UCL"/>
</dbReference>
<dbReference type="GO" id="GO:0003723">
    <property type="term" value="F:RNA binding"/>
    <property type="evidence" value="ECO:0007005"/>
    <property type="project" value="UniProtKB"/>
</dbReference>
<dbReference type="GO" id="GO:0003713">
    <property type="term" value="F:transcription coactivator activity"/>
    <property type="evidence" value="ECO:0000316"/>
    <property type="project" value="ARUK-UCL"/>
</dbReference>
<dbReference type="GO" id="GO:0045944">
    <property type="term" value="P:positive regulation of transcription by RNA polymerase II"/>
    <property type="evidence" value="ECO:0000314"/>
    <property type="project" value="ARUK-UCL"/>
</dbReference>
<dbReference type="FunFam" id="1.25.10.10:FF:000805">
    <property type="entry name" value="Similar to transcription factor CBF/MAK21"/>
    <property type="match status" value="1"/>
</dbReference>
<dbReference type="InterPro" id="IPR016024">
    <property type="entry name" value="ARM-type_fold"/>
</dbReference>
<dbReference type="InterPro" id="IPR005612">
    <property type="entry name" value="CCAAT-binding_factor"/>
</dbReference>
<dbReference type="InterPro" id="IPR040155">
    <property type="entry name" value="CEBPZ/Mak21-like"/>
</dbReference>
<dbReference type="PANTHER" id="PTHR12048">
    <property type="entry name" value="CCAAT-BINDING FACTOR-RELATED"/>
    <property type="match status" value="1"/>
</dbReference>
<dbReference type="PANTHER" id="PTHR12048:SF0">
    <property type="entry name" value="CCAAT_ENHANCER-BINDING PROTEIN ZETA"/>
    <property type="match status" value="1"/>
</dbReference>
<dbReference type="Pfam" id="PF03914">
    <property type="entry name" value="CBF"/>
    <property type="match status" value="1"/>
</dbReference>
<dbReference type="SUPFAM" id="SSF48371">
    <property type="entry name" value="ARM repeat"/>
    <property type="match status" value="1"/>
</dbReference>
<reference key="1">
    <citation type="journal article" date="1990" name="Mol. Cell. Biol.">
        <title>A cloned human CCAAT-box-binding factor stimulates transcription from the human hsp70 promoter.</title>
        <authorList>
            <person name="Lum L."/>
            <person name="Sultzman L."/>
            <person name="Kaufman R."/>
            <person name="Linzer D.I.H."/>
            <person name="Wu B."/>
        </authorList>
    </citation>
    <scope>NUCLEOTIDE SEQUENCE [MRNA]</scope>
    <scope>VARIANT ILE-102</scope>
</reference>
<reference key="2">
    <citation type="journal article" date="2005" name="Nature">
        <title>Generation and annotation of the DNA sequences of human chromosomes 2 and 4.</title>
        <authorList>
            <person name="Hillier L.W."/>
            <person name="Graves T.A."/>
            <person name="Fulton R.S."/>
            <person name="Fulton L.A."/>
            <person name="Pepin K.H."/>
            <person name="Minx P."/>
            <person name="Wagner-McPherson C."/>
            <person name="Layman D."/>
            <person name="Wylie K."/>
            <person name="Sekhon M."/>
            <person name="Becker M.C."/>
            <person name="Fewell G.A."/>
            <person name="Delehaunty K.D."/>
            <person name="Miner T.L."/>
            <person name="Nash W.E."/>
            <person name="Kremitzki C."/>
            <person name="Oddy L."/>
            <person name="Du H."/>
            <person name="Sun H."/>
            <person name="Bradshaw-Cordum H."/>
            <person name="Ali J."/>
            <person name="Carter J."/>
            <person name="Cordes M."/>
            <person name="Harris A."/>
            <person name="Isak A."/>
            <person name="van Brunt A."/>
            <person name="Nguyen C."/>
            <person name="Du F."/>
            <person name="Courtney L."/>
            <person name="Kalicki J."/>
            <person name="Ozersky P."/>
            <person name="Abbott S."/>
            <person name="Armstrong J."/>
            <person name="Belter E.A."/>
            <person name="Caruso L."/>
            <person name="Cedroni M."/>
            <person name="Cotton M."/>
            <person name="Davidson T."/>
            <person name="Desai A."/>
            <person name="Elliott G."/>
            <person name="Erb T."/>
            <person name="Fronick C."/>
            <person name="Gaige T."/>
            <person name="Haakenson W."/>
            <person name="Haglund K."/>
            <person name="Holmes A."/>
            <person name="Harkins R."/>
            <person name="Kim K."/>
            <person name="Kruchowski S.S."/>
            <person name="Strong C.M."/>
            <person name="Grewal N."/>
            <person name="Goyea E."/>
            <person name="Hou S."/>
            <person name="Levy A."/>
            <person name="Martinka S."/>
            <person name="Mead K."/>
            <person name="McLellan M.D."/>
            <person name="Meyer R."/>
            <person name="Randall-Maher J."/>
            <person name="Tomlinson C."/>
            <person name="Dauphin-Kohlberg S."/>
            <person name="Kozlowicz-Reilly A."/>
            <person name="Shah N."/>
            <person name="Swearengen-Shahid S."/>
            <person name="Snider J."/>
            <person name="Strong J.T."/>
            <person name="Thompson J."/>
            <person name="Yoakum M."/>
            <person name="Leonard S."/>
            <person name="Pearman C."/>
            <person name="Trani L."/>
            <person name="Radionenko M."/>
            <person name="Waligorski J.E."/>
            <person name="Wang C."/>
            <person name="Rock S.M."/>
            <person name="Tin-Wollam A.-M."/>
            <person name="Maupin R."/>
            <person name="Latreille P."/>
            <person name="Wendl M.C."/>
            <person name="Yang S.-P."/>
            <person name="Pohl C."/>
            <person name="Wallis J.W."/>
            <person name="Spieth J."/>
            <person name="Bieri T.A."/>
            <person name="Berkowicz N."/>
            <person name="Nelson J.O."/>
            <person name="Osborne J."/>
            <person name="Ding L."/>
            <person name="Meyer R."/>
            <person name="Sabo A."/>
            <person name="Shotland Y."/>
            <person name="Sinha P."/>
            <person name="Wohldmann P.E."/>
            <person name="Cook L.L."/>
            <person name="Hickenbotham M.T."/>
            <person name="Eldred J."/>
            <person name="Williams D."/>
            <person name="Jones T.A."/>
            <person name="She X."/>
            <person name="Ciccarelli F.D."/>
            <person name="Izaurralde E."/>
            <person name="Taylor J."/>
            <person name="Schmutz J."/>
            <person name="Myers R.M."/>
            <person name="Cox D.R."/>
            <person name="Huang X."/>
            <person name="McPherson J.D."/>
            <person name="Mardis E.R."/>
            <person name="Clifton S.W."/>
            <person name="Warren W.C."/>
            <person name="Chinwalla A.T."/>
            <person name="Eddy S.R."/>
            <person name="Marra M.A."/>
            <person name="Ovcharenko I."/>
            <person name="Furey T.S."/>
            <person name="Miller W."/>
            <person name="Eichler E.E."/>
            <person name="Bork P."/>
            <person name="Suyama M."/>
            <person name="Torrents D."/>
            <person name="Waterston R.H."/>
            <person name="Wilson R.K."/>
        </authorList>
    </citation>
    <scope>NUCLEOTIDE SEQUENCE [LARGE SCALE GENOMIC DNA]</scope>
</reference>
<reference key="3">
    <citation type="journal article" date="2004" name="Genome Res.">
        <title>The status, quality, and expansion of the NIH full-length cDNA project: the Mammalian Gene Collection (MGC).</title>
        <authorList>
            <consortium name="The MGC Project Team"/>
        </authorList>
    </citation>
    <scope>NUCLEOTIDE SEQUENCE [LARGE SCALE MRNA]</scope>
    <source>
        <tissue>Testis</tissue>
    </source>
</reference>
<reference key="4">
    <citation type="journal article" date="2006" name="Cell">
        <title>Global, in vivo, and site-specific phosphorylation dynamics in signaling networks.</title>
        <authorList>
            <person name="Olsen J.V."/>
            <person name="Blagoev B."/>
            <person name="Gnad F."/>
            <person name="Macek B."/>
            <person name="Kumar C."/>
            <person name="Mortensen P."/>
            <person name="Mann M."/>
        </authorList>
    </citation>
    <scope>PHOSPHORYLATION [LARGE SCALE ANALYSIS] AT SER-835</scope>
    <scope>IDENTIFICATION BY MASS SPECTROMETRY [LARGE SCALE ANALYSIS]</scope>
    <source>
        <tissue>Cervix carcinoma</tissue>
    </source>
</reference>
<reference key="5">
    <citation type="journal article" date="2008" name="Mol. Cell">
        <title>Kinase-selective enrichment enables quantitative phosphoproteomics of the kinome across the cell cycle.</title>
        <authorList>
            <person name="Daub H."/>
            <person name="Olsen J.V."/>
            <person name="Bairlein M."/>
            <person name="Gnad F."/>
            <person name="Oppermann F.S."/>
            <person name="Korner R."/>
            <person name="Greff Z."/>
            <person name="Keri G."/>
            <person name="Stemmann O."/>
            <person name="Mann M."/>
        </authorList>
    </citation>
    <scope>PHOSPHORYLATION [LARGE SCALE ANALYSIS] AT SER-629</scope>
    <scope>IDENTIFICATION BY MASS SPECTROMETRY [LARGE SCALE ANALYSIS]</scope>
    <source>
        <tissue>Cervix carcinoma</tissue>
    </source>
</reference>
<reference key="6">
    <citation type="journal article" date="2008" name="Proc. Natl. Acad. Sci. U.S.A.">
        <title>A quantitative atlas of mitotic phosphorylation.</title>
        <authorList>
            <person name="Dephoure N."/>
            <person name="Zhou C."/>
            <person name="Villen J."/>
            <person name="Beausoleil S.A."/>
            <person name="Bakalarski C.E."/>
            <person name="Elledge S.J."/>
            <person name="Gygi S.P."/>
        </authorList>
    </citation>
    <scope>PHOSPHORYLATION [LARGE SCALE ANALYSIS] AT SER-629 AND SER-978</scope>
    <scope>IDENTIFICATION BY MASS SPECTROMETRY [LARGE SCALE ANALYSIS]</scope>
    <source>
        <tissue>Cervix carcinoma</tissue>
    </source>
</reference>
<reference key="7">
    <citation type="journal article" date="2009" name="Sci. Signal.">
        <title>Quantitative phosphoproteomic analysis of T cell receptor signaling reveals system-wide modulation of protein-protein interactions.</title>
        <authorList>
            <person name="Mayya V."/>
            <person name="Lundgren D.H."/>
            <person name="Hwang S.-I."/>
            <person name="Rezaul K."/>
            <person name="Wu L."/>
            <person name="Eng J.K."/>
            <person name="Rodionov V."/>
            <person name="Han D.K."/>
        </authorList>
    </citation>
    <scope>PHOSPHORYLATION [LARGE SCALE ANALYSIS] AT SER-629 AND SER-973</scope>
    <scope>IDENTIFICATION BY MASS SPECTROMETRY [LARGE SCALE ANALYSIS]</scope>
    <source>
        <tissue>Leukemic T-cell</tissue>
    </source>
</reference>
<reference key="8">
    <citation type="journal article" date="2009" name="Science">
        <title>Lysine acetylation targets protein complexes and co-regulates major cellular functions.</title>
        <authorList>
            <person name="Choudhary C."/>
            <person name="Kumar C."/>
            <person name="Gnad F."/>
            <person name="Nielsen M.L."/>
            <person name="Rehman M."/>
            <person name="Walther T.C."/>
            <person name="Olsen J.V."/>
            <person name="Mann M."/>
        </authorList>
    </citation>
    <scope>ACETYLATION [LARGE SCALE ANALYSIS] AT LYS-695</scope>
    <scope>IDENTIFICATION BY MASS SPECTROMETRY [LARGE SCALE ANALYSIS]</scope>
</reference>
<reference key="9">
    <citation type="journal article" date="2010" name="Sci. Signal.">
        <title>Quantitative phosphoproteomics reveals widespread full phosphorylation site occupancy during mitosis.</title>
        <authorList>
            <person name="Olsen J.V."/>
            <person name="Vermeulen M."/>
            <person name="Santamaria A."/>
            <person name="Kumar C."/>
            <person name="Miller M.L."/>
            <person name="Jensen L.J."/>
            <person name="Gnad F."/>
            <person name="Cox J."/>
            <person name="Jensen T.S."/>
            <person name="Nigg E.A."/>
            <person name="Brunak S."/>
            <person name="Mann M."/>
        </authorList>
    </citation>
    <scope>PHOSPHORYLATION [LARGE SCALE ANALYSIS] AT SER-629</scope>
    <scope>IDENTIFICATION BY MASS SPECTROMETRY [LARGE SCALE ANALYSIS]</scope>
    <source>
        <tissue>Cervix carcinoma</tissue>
    </source>
</reference>
<reference key="10">
    <citation type="journal article" date="2011" name="Sci. Signal.">
        <title>System-wide temporal characterization of the proteome and phosphoproteome of human embryonic stem cell differentiation.</title>
        <authorList>
            <person name="Rigbolt K.T."/>
            <person name="Prokhorova T.A."/>
            <person name="Akimov V."/>
            <person name="Henningsen J."/>
            <person name="Johansen P.T."/>
            <person name="Kratchmarova I."/>
            <person name="Kassem M."/>
            <person name="Mann M."/>
            <person name="Olsen J.V."/>
            <person name="Blagoev B."/>
        </authorList>
    </citation>
    <scope>PHOSPHORYLATION [LARGE SCALE ANALYSIS] AT SER-629</scope>
    <scope>IDENTIFICATION BY MASS SPECTROMETRY [LARGE SCALE ANALYSIS]</scope>
</reference>
<reference key="11">
    <citation type="journal article" date="2013" name="J. Proteome Res.">
        <title>Toward a comprehensive characterization of a human cancer cell phosphoproteome.</title>
        <authorList>
            <person name="Zhou H."/>
            <person name="Di Palma S."/>
            <person name="Preisinger C."/>
            <person name="Peng M."/>
            <person name="Polat A.N."/>
            <person name="Heck A.J."/>
            <person name="Mohammed S."/>
        </authorList>
    </citation>
    <scope>PHOSPHORYLATION [LARGE SCALE ANALYSIS] AT SER-113; SER-629 AND SER-959</scope>
    <scope>VARIANT [LARGE SCALE ANALYSIS] ILE-102</scope>
    <scope>IDENTIFICATION BY MASS SPECTROMETRY [LARGE SCALE ANALYSIS]</scope>
    <source>
        <tissue>Cervix carcinoma</tissue>
        <tissue>Erythroleukemia</tissue>
    </source>
</reference>
<reference key="12">
    <citation type="journal article" date="2014" name="J. Proteomics">
        <title>An enzyme assisted RP-RPLC approach for in-depth analysis of human liver phosphoproteome.</title>
        <authorList>
            <person name="Bian Y."/>
            <person name="Song C."/>
            <person name="Cheng K."/>
            <person name="Dong M."/>
            <person name="Wang F."/>
            <person name="Huang J."/>
            <person name="Sun D."/>
            <person name="Wang L."/>
            <person name="Ye M."/>
            <person name="Zou H."/>
        </authorList>
    </citation>
    <scope>PHOSPHORYLATION [LARGE SCALE ANALYSIS] AT SER-629</scope>
    <scope>IDENTIFICATION BY MASS SPECTROMETRY [LARGE SCALE ANALYSIS]</scope>
    <source>
        <tissue>Liver</tissue>
    </source>
</reference>
<name>CEBPZ_HUMAN</name>
<protein>
    <recommendedName>
        <fullName>CCAAT/enhancer-binding protein zeta</fullName>
    </recommendedName>
    <alternativeName>
        <fullName>CCAAT-box-binding transcription factor</fullName>
        <shortName>CBF</shortName>
        <shortName>CCAAT-binding factor</shortName>
    </alternativeName>
</protein>
<keyword id="KW-0007">Acetylation</keyword>
<keyword id="KW-0010">Activator</keyword>
<keyword id="KW-0539">Nucleus</keyword>
<keyword id="KW-0597">Phosphoprotein</keyword>
<keyword id="KW-1267">Proteomics identification</keyword>
<keyword id="KW-1185">Reference proteome</keyword>
<keyword id="KW-0804">Transcription</keyword>
<keyword id="KW-0805">Transcription regulation</keyword>
<comment type="function">
    <text>Stimulates transcription from the HSP70 promoter.</text>
</comment>
<comment type="interaction">
    <interactant intactId="EBI-1046778">
        <id>Q03701</id>
    </interactant>
    <interactant intactId="EBI-713955">
        <id>O75569</id>
        <label>PRKRA</label>
    </interactant>
    <organismsDiffer>false</organismsDiffer>
    <experiments>3</experiments>
</comment>
<comment type="subcellular location">
    <subcellularLocation>
        <location>Nucleus</location>
    </subcellularLocation>
</comment>
<comment type="similarity">
    <text evidence="3">Belongs to the CBF/MAK21 family.</text>
</comment>
<comment type="sequence caution" evidence="3">
    <conflict type="frameshift">
        <sequence resource="EMBL-CDS" id="AAA51924"/>
    </conflict>
</comment>
<gene>
    <name type="primary">CEBPZ</name>
    <name type="synonym">CBF2</name>
</gene>
<evidence type="ECO:0000256" key="1">
    <source>
        <dbReference type="SAM" id="MobiDB-lite"/>
    </source>
</evidence>
<evidence type="ECO:0000269" key="2">
    <source>
    </source>
</evidence>
<evidence type="ECO:0000305" key="3"/>
<evidence type="ECO:0007744" key="4">
    <source>
    </source>
</evidence>
<evidence type="ECO:0007744" key="5">
    <source>
    </source>
</evidence>
<evidence type="ECO:0007744" key="6">
    <source>
    </source>
</evidence>
<evidence type="ECO:0007744" key="7">
    <source>
    </source>
</evidence>
<evidence type="ECO:0007744" key="8">
    <source>
    </source>
</evidence>
<evidence type="ECO:0007744" key="9">
    <source>
    </source>
</evidence>
<evidence type="ECO:0007744" key="10">
    <source>
    </source>
</evidence>
<evidence type="ECO:0007744" key="11">
    <source>
    </source>
</evidence>
<evidence type="ECO:0007744" key="12">
    <source>
    </source>
</evidence>